<organism>
    <name type="scientific">Neisseria meningitidis serogroup A / serotype 4A (strain DSM 15465 / Z2491)</name>
    <dbReference type="NCBI Taxonomy" id="122587"/>
    <lineage>
        <taxon>Bacteria</taxon>
        <taxon>Pseudomonadati</taxon>
        <taxon>Pseudomonadota</taxon>
        <taxon>Betaproteobacteria</taxon>
        <taxon>Neisseriales</taxon>
        <taxon>Neisseriaceae</taxon>
        <taxon>Neisseria</taxon>
    </lineage>
</organism>
<protein>
    <recommendedName>
        <fullName evidence="1">Phosphoglucosamine mutase</fullName>
        <ecNumber evidence="1">5.4.2.10</ecNumber>
    </recommendedName>
</protein>
<reference key="1">
    <citation type="journal article" date="2000" name="Nature">
        <title>Complete DNA sequence of a serogroup A strain of Neisseria meningitidis Z2491.</title>
        <authorList>
            <person name="Parkhill J."/>
            <person name="Achtman M."/>
            <person name="James K.D."/>
            <person name="Bentley S.D."/>
            <person name="Churcher C.M."/>
            <person name="Klee S.R."/>
            <person name="Morelli G."/>
            <person name="Basham D."/>
            <person name="Brown D."/>
            <person name="Chillingworth T."/>
            <person name="Davies R.M."/>
            <person name="Davis P."/>
            <person name="Devlin K."/>
            <person name="Feltwell T."/>
            <person name="Hamlin N."/>
            <person name="Holroyd S."/>
            <person name="Jagels K."/>
            <person name="Leather S."/>
            <person name="Moule S."/>
            <person name="Mungall K.L."/>
            <person name="Quail M.A."/>
            <person name="Rajandream M.A."/>
            <person name="Rutherford K.M."/>
            <person name="Simmonds M."/>
            <person name="Skelton J."/>
            <person name="Whitehead S."/>
            <person name="Spratt B.G."/>
            <person name="Barrell B.G."/>
        </authorList>
    </citation>
    <scope>NUCLEOTIDE SEQUENCE [LARGE SCALE GENOMIC DNA]</scope>
    <source>
        <strain>DSM 15465 / Z2491</strain>
    </source>
</reference>
<feature type="chain" id="PRO_0000147920" description="Phosphoglucosamine mutase">
    <location>
        <begin position="1"/>
        <end position="444"/>
    </location>
</feature>
<feature type="active site" description="Phosphoserine intermediate" evidence="1">
    <location>
        <position position="104"/>
    </location>
</feature>
<feature type="binding site" description="via phosphate group" evidence="1">
    <location>
        <position position="104"/>
    </location>
    <ligand>
        <name>Mg(2+)</name>
        <dbReference type="ChEBI" id="CHEBI:18420"/>
    </ligand>
</feature>
<feature type="binding site" evidence="1">
    <location>
        <position position="243"/>
    </location>
    <ligand>
        <name>Mg(2+)</name>
        <dbReference type="ChEBI" id="CHEBI:18420"/>
    </ligand>
</feature>
<feature type="binding site" evidence="1">
    <location>
        <position position="245"/>
    </location>
    <ligand>
        <name>Mg(2+)</name>
        <dbReference type="ChEBI" id="CHEBI:18420"/>
    </ligand>
</feature>
<feature type="binding site" evidence="1">
    <location>
        <position position="247"/>
    </location>
    <ligand>
        <name>Mg(2+)</name>
        <dbReference type="ChEBI" id="CHEBI:18420"/>
    </ligand>
</feature>
<feature type="modified residue" description="Phosphoserine" evidence="1">
    <location>
        <position position="104"/>
    </location>
</feature>
<proteinExistence type="inferred from homology"/>
<name>GLMM_NEIMA</name>
<evidence type="ECO:0000255" key="1">
    <source>
        <dbReference type="HAMAP-Rule" id="MF_01554"/>
    </source>
</evidence>
<sequence length="444" mass="47852">MAKKYFGTDGVRGEVGQFPITPDFVLKLGYAAGQVLVQHDTDQKPTVLIGKDTRISGYMLEAALVAGFTAAGVNVVQTGPLPTPGVAYLTRALRLSAGVMISASHNAYSDNGIKFFAEGGVKLSDEIELEIEAKIDEEMKTQPSARLGRARRISGADDRYIEFCKSTFPSHSDLRGLKLVIDTANGAGYGVAPKVFHELGAQVVSIGDEPNGYNINEKCGATYTKTLQAAVLQHEADYGIALDGDGDRLMMVDKNGKVYDGDSLIYVIAKARAREGINIGGVVGTVMTNMAMEIALKEQGVDFCRAKVGDRYVLEQLNQRSWLIGGEASGHILCMDKHNTGDGIISALQVLAALQTLNQDLATVCADWQPYPQTMINVRIQKGQKWQEASKDVLAEVEKELEGKGRVVLRASGTEPVVRVMVEARQADWARDGAERIASAIGSL</sequence>
<accession>Q9JT71</accession>
<accession>A1ITE7</accession>
<comment type="function">
    <text evidence="1">Catalyzes the conversion of glucosamine-6-phosphate to glucosamine-1-phosphate.</text>
</comment>
<comment type="catalytic activity">
    <reaction evidence="1">
        <text>alpha-D-glucosamine 1-phosphate = D-glucosamine 6-phosphate</text>
        <dbReference type="Rhea" id="RHEA:23424"/>
        <dbReference type="ChEBI" id="CHEBI:58516"/>
        <dbReference type="ChEBI" id="CHEBI:58725"/>
        <dbReference type="EC" id="5.4.2.10"/>
    </reaction>
</comment>
<comment type="cofactor">
    <cofactor evidence="1">
        <name>Mg(2+)</name>
        <dbReference type="ChEBI" id="CHEBI:18420"/>
    </cofactor>
    <text evidence="1">Binds 1 Mg(2+) ion per subunit.</text>
</comment>
<comment type="PTM">
    <text evidence="1">Activated by phosphorylation.</text>
</comment>
<comment type="similarity">
    <text evidence="1">Belongs to the phosphohexose mutase family.</text>
</comment>
<dbReference type="EC" id="5.4.2.10" evidence="1"/>
<dbReference type="EMBL" id="AL157959">
    <property type="protein sequence ID" value="CAM09061.1"/>
    <property type="molecule type" value="Genomic_DNA"/>
</dbReference>
<dbReference type="PIR" id="C81823">
    <property type="entry name" value="C81823"/>
</dbReference>
<dbReference type="RefSeq" id="WP_002247038.1">
    <property type="nucleotide sequence ID" value="NC_003116.1"/>
</dbReference>
<dbReference type="SMR" id="Q9JT71"/>
<dbReference type="EnsemblBacteria" id="CAM09061">
    <property type="protein sequence ID" value="CAM09061"/>
    <property type="gene ID" value="NMA1949"/>
</dbReference>
<dbReference type="GeneID" id="93387635"/>
<dbReference type="KEGG" id="nma:NMA1949"/>
<dbReference type="HOGENOM" id="CLU_016950_7_0_4"/>
<dbReference type="Proteomes" id="UP000000626">
    <property type="component" value="Chromosome"/>
</dbReference>
<dbReference type="GO" id="GO:0005829">
    <property type="term" value="C:cytosol"/>
    <property type="evidence" value="ECO:0007669"/>
    <property type="project" value="TreeGrafter"/>
</dbReference>
<dbReference type="GO" id="GO:0000287">
    <property type="term" value="F:magnesium ion binding"/>
    <property type="evidence" value="ECO:0007669"/>
    <property type="project" value="UniProtKB-UniRule"/>
</dbReference>
<dbReference type="GO" id="GO:0008966">
    <property type="term" value="F:phosphoglucosamine mutase activity"/>
    <property type="evidence" value="ECO:0007669"/>
    <property type="project" value="UniProtKB-UniRule"/>
</dbReference>
<dbReference type="GO" id="GO:0004615">
    <property type="term" value="F:phosphomannomutase activity"/>
    <property type="evidence" value="ECO:0007669"/>
    <property type="project" value="TreeGrafter"/>
</dbReference>
<dbReference type="GO" id="GO:0005975">
    <property type="term" value="P:carbohydrate metabolic process"/>
    <property type="evidence" value="ECO:0007669"/>
    <property type="project" value="InterPro"/>
</dbReference>
<dbReference type="GO" id="GO:0009252">
    <property type="term" value="P:peptidoglycan biosynthetic process"/>
    <property type="evidence" value="ECO:0007669"/>
    <property type="project" value="TreeGrafter"/>
</dbReference>
<dbReference type="GO" id="GO:0006048">
    <property type="term" value="P:UDP-N-acetylglucosamine biosynthetic process"/>
    <property type="evidence" value="ECO:0007669"/>
    <property type="project" value="TreeGrafter"/>
</dbReference>
<dbReference type="CDD" id="cd05802">
    <property type="entry name" value="GlmM"/>
    <property type="match status" value="1"/>
</dbReference>
<dbReference type="FunFam" id="3.30.310.50:FF:000001">
    <property type="entry name" value="Phosphoglucosamine mutase"/>
    <property type="match status" value="1"/>
</dbReference>
<dbReference type="FunFam" id="3.40.120.10:FF:000001">
    <property type="entry name" value="Phosphoglucosamine mutase"/>
    <property type="match status" value="1"/>
</dbReference>
<dbReference type="FunFam" id="3.40.120.10:FF:000003">
    <property type="entry name" value="Phosphoglucosamine mutase"/>
    <property type="match status" value="1"/>
</dbReference>
<dbReference type="Gene3D" id="3.40.120.10">
    <property type="entry name" value="Alpha-D-Glucose-1,6-Bisphosphate, subunit A, domain 3"/>
    <property type="match status" value="3"/>
</dbReference>
<dbReference type="Gene3D" id="3.30.310.50">
    <property type="entry name" value="Alpha-D-phosphohexomutase, C-terminal domain"/>
    <property type="match status" value="1"/>
</dbReference>
<dbReference type="HAMAP" id="MF_01554_B">
    <property type="entry name" value="GlmM_B"/>
    <property type="match status" value="1"/>
</dbReference>
<dbReference type="InterPro" id="IPR005844">
    <property type="entry name" value="A-D-PHexomutase_a/b/a-I"/>
</dbReference>
<dbReference type="InterPro" id="IPR016055">
    <property type="entry name" value="A-D-PHexomutase_a/b/a-I/II/III"/>
</dbReference>
<dbReference type="InterPro" id="IPR005845">
    <property type="entry name" value="A-D-PHexomutase_a/b/a-II"/>
</dbReference>
<dbReference type="InterPro" id="IPR005846">
    <property type="entry name" value="A-D-PHexomutase_a/b/a-III"/>
</dbReference>
<dbReference type="InterPro" id="IPR005843">
    <property type="entry name" value="A-D-PHexomutase_C"/>
</dbReference>
<dbReference type="InterPro" id="IPR036900">
    <property type="entry name" value="A-D-PHexomutase_C_sf"/>
</dbReference>
<dbReference type="InterPro" id="IPR005841">
    <property type="entry name" value="Alpha-D-phosphohexomutase_SF"/>
</dbReference>
<dbReference type="InterPro" id="IPR006352">
    <property type="entry name" value="GlmM_bact"/>
</dbReference>
<dbReference type="InterPro" id="IPR050060">
    <property type="entry name" value="Phosphoglucosamine_mutase"/>
</dbReference>
<dbReference type="NCBIfam" id="TIGR01455">
    <property type="entry name" value="glmM"/>
    <property type="match status" value="1"/>
</dbReference>
<dbReference type="NCBIfam" id="NF008139">
    <property type="entry name" value="PRK10887.1"/>
    <property type="match status" value="1"/>
</dbReference>
<dbReference type="PANTHER" id="PTHR42946:SF1">
    <property type="entry name" value="PHOSPHOGLUCOMUTASE (ALPHA-D-GLUCOSE-1,6-BISPHOSPHATE-DEPENDENT)"/>
    <property type="match status" value="1"/>
</dbReference>
<dbReference type="PANTHER" id="PTHR42946">
    <property type="entry name" value="PHOSPHOHEXOSE MUTASE"/>
    <property type="match status" value="1"/>
</dbReference>
<dbReference type="Pfam" id="PF02878">
    <property type="entry name" value="PGM_PMM_I"/>
    <property type="match status" value="1"/>
</dbReference>
<dbReference type="Pfam" id="PF02879">
    <property type="entry name" value="PGM_PMM_II"/>
    <property type="match status" value="1"/>
</dbReference>
<dbReference type="Pfam" id="PF02880">
    <property type="entry name" value="PGM_PMM_III"/>
    <property type="match status" value="1"/>
</dbReference>
<dbReference type="Pfam" id="PF00408">
    <property type="entry name" value="PGM_PMM_IV"/>
    <property type="match status" value="1"/>
</dbReference>
<dbReference type="PRINTS" id="PR00509">
    <property type="entry name" value="PGMPMM"/>
</dbReference>
<dbReference type="SUPFAM" id="SSF55957">
    <property type="entry name" value="Phosphoglucomutase, C-terminal domain"/>
    <property type="match status" value="1"/>
</dbReference>
<dbReference type="SUPFAM" id="SSF53738">
    <property type="entry name" value="Phosphoglucomutase, first 3 domains"/>
    <property type="match status" value="3"/>
</dbReference>
<keyword id="KW-0413">Isomerase</keyword>
<keyword id="KW-0460">Magnesium</keyword>
<keyword id="KW-0479">Metal-binding</keyword>
<keyword id="KW-0597">Phosphoprotein</keyword>
<gene>
    <name evidence="1" type="primary">glmM</name>
    <name type="ordered locus">NMA1949</name>
</gene>